<gene>
    <name type="primary">CPK8</name>
    <name type="synonym">CDPK19</name>
    <name type="ordered locus">At5g19450</name>
    <name type="ORF">F7K24.200</name>
</gene>
<accession>Q42438</accession>
<accession>Q0WUS5</accession>
<organism>
    <name type="scientific">Arabidopsis thaliana</name>
    <name type="common">Mouse-ear cress</name>
    <dbReference type="NCBI Taxonomy" id="3702"/>
    <lineage>
        <taxon>Eukaryota</taxon>
        <taxon>Viridiplantae</taxon>
        <taxon>Streptophyta</taxon>
        <taxon>Embryophyta</taxon>
        <taxon>Tracheophyta</taxon>
        <taxon>Spermatophyta</taxon>
        <taxon>Magnoliopsida</taxon>
        <taxon>eudicotyledons</taxon>
        <taxon>Gunneridae</taxon>
        <taxon>Pentapetalae</taxon>
        <taxon>rosids</taxon>
        <taxon>malvids</taxon>
        <taxon>Brassicales</taxon>
        <taxon>Brassicaceae</taxon>
        <taxon>Camelineae</taxon>
        <taxon>Arabidopsis</taxon>
    </lineage>
</organism>
<keyword id="KW-0025">Alternative splicing</keyword>
<keyword id="KW-0067">ATP-binding</keyword>
<keyword id="KW-0106">Calcium</keyword>
<keyword id="KW-1003">Cell membrane</keyword>
<keyword id="KW-0418">Kinase</keyword>
<keyword id="KW-0449">Lipoprotein</keyword>
<keyword id="KW-0472">Membrane</keyword>
<keyword id="KW-0479">Metal-binding</keyword>
<keyword id="KW-0519">Myristate</keyword>
<keyword id="KW-0547">Nucleotide-binding</keyword>
<keyword id="KW-0597">Phosphoprotein</keyword>
<keyword id="KW-1185">Reference proteome</keyword>
<keyword id="KW-0677">Repeat</keyword>
<keyword id="KW-0723">Serine/threonine-protein kinase</keyword>
<keyword id="KW-0808">Transferase</keyword>
<name>CDPK8_ARATH</name>
<comment type="function">
    <text>May play a role in signal transduction pathways that involve calcium as a second messenger.</text>
</comment>
<comment type="catalytic activity">
    <reaction>
        <text>L-seryl-[protein] + ATP = O-phospho-L-seryl-[protein] + ADP + H(+)</text>
        <dbReference type="Rhea" id="RHEA:17989"/>
        <dbReference type="Rhea" id="RHEA-COMP:9863"/>
        <dbReference type="Rhea" id="RHEA-COMP:11604"/>
        <dbReference type="ChEBI" id="CHEBI:15378"/>
        <dbReference type="ChEBI" id="CHEBI:29999"/>
        <dbReference type="ChEBI" id="CHEBI:30616"/>
        <dbReference type="ChEBI" id="CHEBI:83421"/>
        <dbReference type="ChEBI" id="CHEBI:456216"/>
        <dbReference type="EC" id="2.7.11.1"/>
    </reaction>
</comment>
<comment type="catalytic activity">
    <reaction>
        <text>L-threonyl-[protein] + ATP = O-phospho-L-threonyl-[protein] + ADP + H(+)</text>
        <dbReference type="Rhea" id="RHEA:46608"/>
        <dbReference type="Rhea" id="RHEA-COMP:11060"/>
        <dbReference type="Rhea" id="RHEA-COMP:11605"/>
        <dbReference type="ChEBI" id="CHEBI:15378"/>
        <dbReference type="ChEBI" id="CHEBI:30013"/>
        <dbReference type="ChEBI" id="CHEBI:30616"/>
        <dbReference type="ChEBI" id="CHEBI:61977"/>
        <dbReference type="ChEBI" id="CHEBI:456216"/>
        <dbReference type="EC" id="2.7.11.1"/>
    </reaction>
</comment>
<comment type="activity regulation">
    <text evidence="1">Activated by calcium. Autophosphorylation may play an important role in the regulation of the kinase activity (By similarity).</text>
</comment>
<comment type="subcellular location">
    <subcellularLocation>
        <location evidence="8">Cell membrane</location>
        <topology evidence="8">Lipid-anchor</topology>
    </subcellularLocation>
</comment>
<comment type="alternative products">
    <event type="alternative splicing"/>
    <isoform>
        <id>Q42438-1</id>
        <name>1</name>
        <sequence type="displayed"/>
    </isoform>
    <isoform>
        <id>Q42438-2</id>
        <name>2</name>
        <sequence type="described" ref="VSP_036290"/>
    </isoform>
</comment>
<comment type="domain">
    <text evidence="1">There are 3 contiguous domains conserved in the CDPK subfamily: a kinase domain, an autoinhibitory (junction) domain and a calmodulin-like domain. The autoinhibitory domain (321-351) inactivates kinase activity under calcium-free conditions (By similarity).</text>
</comment>
<comment type="similarity">
    <text evidence="4">Belongs to the protein kinase superfamily. Ser/Thr protein kinase family. CDPK subfamily.</text>
</comment>
<proteinExistence type="evidence at protein level"/>
<sequence>MGNCCASPGSETGSKKGKPKIKSNPFYSEAYTTNGSGTGFKLSVLKDPTGHDISLMYDLGREVGRGEFGITYLCTDIKTGEKYACKSISKKKLRTAVDIEDVRREVEIMKHMPRHPNIVSLKDAFEDDDAVHIVMELCEGGELFDRIVARGHYTERAAAAVMKTILEVVQICHKHGVMHRDLKPENFLFANKKETSALKAIDFGLSVFFKPGEGFNEIVGSPYYMAPEVLRRNYGPEVDIWSAGVILYILLCGVPPFWAETEQGVAQAIIRSVIDFKRDPWPRVSETAKDLVRKMLEPDPKKRLSAAQVLEHSWIQNAKKAPNVSLGETVKARLKQFSVMNKLKKRALRVIAEHLSVEEVAGIKEAFEMMDSKKTGKINLEELKFGLHKLGQQQIPDTDLQILMEAADVDGDGTLNYGEFVAVSVHLKKMANDEHLHKAFSFFDQNQSDYIEIEELREALNDEVDTNSEEVVAAIMQDVDTDKDGRISYEEFAAMMKAGTDWRKASRQYSRERFNSLSLKLMREGSLQLEGEN</sequence>
<evidence type="ECO:0000250" key="1"/>
<evidence type="ECO:0000250" key="2">
    <source>
        <dbReference type="UniProtKB" id="Q9FKW4"/>
    </source>
</evidence>
<evidence type="ECO:0000255" key="3"/>
<evidence type="ECO:0000255" key="4">
    <source>
        <dbReference type="PROSITE-ProRule" id="PRU00159"/>
    </source>
</evidence>
<evidence type="ECO:0000255" key="5">
    <source>
        <dbReference type="PROSITE-ProRule" id="PRU00448"/>
    </source>
</evidence>
<evidence type="ECO:0000255" key="6">
    <source>
        <dbReference type="PROSITE-ProRule" id="PRU10027"/>
    </source>
</evidence>
<evidence type="ECO:0000256" key="7">
    <source>
        <dbReference type="SAM" id="MobiDB-lite"/>
    </source>
</evidence>
<evidence type="ECO:0000269" key="8">
    <source>
    </source>
</evidence>
<evidence type="ECO:0000303" key="9">
    <source ref="4"/>
</evidence>
<evidence type="ECO:0000305" key="10"/>
<evidence type="ECO:0007744" key="11">
    <source>
    </source>
</evidence>
<feature type="initiator methionine" description="Removed" evidence="3">
    <location>
        <position position="1"/>
    </location>
</feature>
<feature type="chain" id="PRO_0000363333" description="Calcium-dependent protein kinase 8">
    <location>
        <begin position="2"/>
        <end position="533"/>
    </location>
</feature>
<feature type="domain" description="Protein kinase" evidence="4">
    <location>
        <begin position="57"/>
        <end position="315"/>
    </location>
</feature>
<feature type="domain" description="EF-hand 1" evidence="5">
    <location>
        <begin position="358"/>
        <end position="394"/>
    </location>
</feature>
<feature type="domain" description="EF-hand 2" evidence="5">
    <location>
        <begin position="395"/>
        <end position="430"/>
    </location>
</feature>
<feature type="domain" description="EF-hand 3" evidence="5">
    <location>
        <begin position="431"/>
        <end position="466"/>
    </location>
</feature>
<feature type="domain" description="EF-hand 4" evidence="5">
    <location>
        <begin position="467"/>
        <end position="502"/>
    </location>
</feature>
<feature type="region of interest" description="Disordered" evidence="7">
    <location>
        <begin position="1"/>
        <end position="21"/>
    </location>
</feature>
<feature type="region of interest" description="Autoinhibitory domain" evidence="1">
    <location>
        <begin position="321"/>
        <end position="351"/>
    </location>
</feature>
<feature type="active site" description="Proton acceptor" evidence="4 6">
    <location>
        <position position="181"/>
    </location>
</feature>
<feature type="binding site" evidence="4">
    <location>
        <begin position="63"/>
        <end position="71"/>
    </location>
    <ligand>
        <name>ATP</name>
        <dbReference type="ChEBI" id="CHEBI:30616"/>
    </ligand>
</feature>
<feature type="binding site" evidence="4">
    <location>
        <position position="86"/>
    </location>
    <ligand>
        <name>ATP</name>
        <dbReference type="ChEBI" id="CHEBI:30616"/>
    </ligand>
</feature>
<feature type="binding site" evidence="10">
    <location>
        <position position="371"/>
    </location>
    <ligand>
        <name>Ca(2+)</name>
        <dbReference type="ChEBI" id="CHEBI:29108"/>
        <label>1</label>
    </ligand>
</feature>
<feature type="binding site" evidence="10">
    <location>
        <position position="375"/>
    </location>
    <ligand>
        <name>Ca(2+)</name>
        <dbReference type="ChEBI" id="CHEBI:29108"/>
        <label>1</label>
    </ligand>
</feature>
<feature type="binding site" evidence="10">
    <location>
        <position position="377"/>
    </location>
    <ligand>
        <name>Ca(2+)</name>
        <dbReference type="ChEBI" id="CHEBI:29108"/>
        <label>1</label>
    </ligand>
</feature>
<feature type="binding site" evidence="10">
    <location>
        <position position="382"/>
    </location>
    <ligand>
        <name>Ca(2+)</name>
        <dbReference type="ChEBI" id="CHEBI:29108"/>
        <label>1</label>
    </ligand>
</feature>
<feature type="binding site" evidence="5">
    <location>
        <position position="408"/>
    </location>
    <ligand>
        <name>Ca(2+)</name>
        <dbReference type="ChEBI" id="CHEBI:29108"/>
        <label>2</label>
    </ligand>
</feature>
<feature type="binding site" evidence="5">
    <location>
        <position position="410"/>
    </location>
    <ligand>
        <name>Ca(2+)</name>
        <dbReference type="ChEBI" id="CHEBI:29108"/>
        <label>2</label>
    </ligand>
</feature>
<feature type="binding site" evidence="5">
    <location>
        <position position="412"/>
    </location>
    <ligand>
        <name>Ca(2+)</name>
        <dbReference type="ChEBI" id="CHEBI:29108"/>
        <label>2</label>
    </ligand>
</feature>
<feature type="binding site" evidence="5">
    <location>
        <position position="414"/>
    </location>
    <ligand>
        <name>Ca(2+)</name>
        <dbReference type="ChEBI" id="CHEBI:29108"/>
        <label>2</label>
    </ligand>
</feature>
<feature type="binding site" evidence="5">
    <location>
        <position position="419"/>
    </location>
    <ligand>
        <name>Ca(2+)</name>
        <dbReference type="ChEBI" id="CHEBI:29108"/>
        <label>2</label>
    </ligand>
</feature>
<feature type="binding site" evidence="5">
    <location>
        <position position="444"/>
    </location>
    <ligand>
        <name>Ca(2+)</name>
        <dbReference type="ChEBI" id="CHEBI:29108"/>
        <label>3</label>
    </ligand>
</feature>
<feature type="binding site" evidence="5">
    <location>
        <position position="446"/>
    </location>
    <ligand>
        <name>Ca(2+)</name>
        <dbReference type="ChEBI" id="CHEBI:29108"/>
        <label>3</label>
    </ligand>
</feature>
<feature type="binding site" evidence="5">
    <location>
        <position position="448"/>
    </location>
    <ligand>
        <name>Ca(2+)</name>
        <dbReference type="ChEBI" id="CHEBI:29108"/>
        <label>3</label>
    </ligand>
</feature>
<feature type="binding site" evidence="5">
    <location>
        <position position="450"/>
    </location>
    <ligand>
        <name>Ca(2+)</name>
        <dbReference type="ChEBI" id="CHEBI:29108"/>
        <label>3</label>
    </ligand>
</feature>
<feature type="binding site" evidence="5">
    <location>
        <position position="455"/>
    </location>
    <ligand>
        <name>Ca(2+)</name>
        <dbReference type="ChEBI" id="CHEBI:29108"/>
        <label>3</label>
    </ligand>
</feature>
<feature type="binding site" evidence="5">
    <location>
        <position position="480"/>
    </location>
    <ligand>
        <name>Ca(2+)</name>
        <dbReference type="ChEBI" id="CHEBI:29108"/>
        <label>4</label>
    </ligand>
</feature>
<feature type="binding site" evidence="5">
    <location>
        <position position="482"/>
    </location>
    <ligand>
        <name>Ca(2+)</name>
        <dbReference type="ChEBI" id="CHEBI:29108"/>
        <label>4</label>
    </ligand>
</feature>
<feature type="binding site" evidence="5">
    <location>
        <position position="484"/>
    </location>
    <ligand>
        <name>Ca(2+)</name>
        <dbReference type="ChEBI" id="CHEBI:29108"/>
        <label>4</label>
    </ligand>
</feature>
<feature type="binding site" evidence="5">
    <location>
        <position position="486"/>
    </location>
    <ligand>
        <name>Ca(2+)</name>
        <dbReference type="ChEBI" id="CHEBI:29108"/>
        <label>4</label>
    </ligand>
</feature>
<feature type="binding site" evidence="5">
    <location>
        <position position="491"/>
    </location>
    <ligand>
        <name>Ca(2+)</name>
        <dbReference type="ChEBI" id="CHEBI:29108"/>
        <label>4</label>
    </ligand>
</feature>
<feature type="modified residue" description="Phosphoserine" evidence="2">
    <location>
        <position position="221"/>
    </location>
</feature>
<feature type="modified residue" description="Phosphoserine" evidence="2">
    <location>
        <position position="488"/>
    </location>
</feature>
<feature type="modified residue" description="Phosphoserine" evidence="11">
    <location>
        <position position="526"/>
    </location>
</feature>
<feature type="lipid moiety-binding region" description="N-myristoyl glycine" evidence="3">
    <location>
        <position position="2"/>
    </location>
</feature>
<feature type="splice variant" id="VSP_036290" description="In isoform 2." evidence="9">
    <location>
        <begin position="1"/>
        <end position="55"/>
    </location>
</feature>
<protein>
    <recommendedName>
        <fullName>Calcium-dependent protein kinase 8</fullName>
        <ecNumber>2.7.11.1</ecNumber>
    </recommendedName>
    <alternativeName>
        <fullName>Calcium-dependent protein kinase isoform CDPK19</fullName>
        <shortName>AtCDPK19</shortName>
    </alternativeName>
</protein>
<reference key="1">
    <citation type="journal article" date="1996" name="Plant Mol. Biol.">
        <title>Expression of three members of the calcium-dependent protein kinase gene family in Arabidopsis thaliana.</title>
        <authorList>
            <person name="Hong Y."/>
            <person name="Takano M."/>
            <person name="Liu C.-M."/>
            <person name="Gasch A."/>
            <person name="Chye M.-L."/>
            <person name="Chua N.-H."/>
        </authorList>
    </citation>
    <scope>NUCLEOTIDE SEQUENCE [GENOMIC DNA / MRNA] (ISOFORM 1)</scope>
    <source>
        <strain>Columbia</strain>
    </source>
</reference>
<reference key="2">
    <citation type="journal article" date="2000" name="Nature">
        <title>Sequence and analysis of chromosome 5 of the plant Arabidopsis thaliana.</title>
        <authorList>
            <person name="Tabata S."/>
            <person name="Kaneko T."/>
            <person name="Nakamura Y."/>
            <person name="Kotani H."/>
            <person name="Kato T."/>
            <person name="Asamizu E."/>
            <person name="Miyajima N."/>
            <person name="Sasamoto S."/>
            <person name="Kimura T."/>
            <person name="Hosouchi T."/>
            <person name="Kawashima K."/>
            <person name="Kohara M."/>
            <person name="Matsumoto M."/>
            <person name="Matsuno A."/>
            <person name="Muraki A."/>
            <person name="Nakayama S."/>
            <person name="Nakazaki N."/>
            <person name="Naruo K."/>
            <person name="Okumura S."/>
            <person name="Shinpo S."/>
            <person name="Takeuchi C."/>
            <person name="Wada T."/>
            <person name="Watanabe A."/>
            <person name="Yamada M."/>
            <person name="Yasuda M."/>
            <person name="Sato S."/>
            <person name="de la Bastide M."/>
            <person name="Huang E."/>
            <person name="Spiegel L."/>
            <person name="Gnoj L."/>
            <person name="O'Shaughnessy A."/>
            <person name="Preston R."/>
            <person name="Habermann K."/>
            <person name="Murray J."/>
            <person name="Johnson D."/>
            <person name="Rohlfing T."/>
            <person name="Nelson J."/>
            <person name="Stoneking T."/>
            <person name="Pepin K."/>
            <person name="Spieth J."/>
            <person name="Sekhon M."/>
            <person name="Armstrong J."/>
            <person name="Becker M."/>
            <person name="Belter E."/>
            <person name="Cordum H."/>
            <person name="Cordes M."/>
            <person name="Courtney L."/>
            <person name="Courtney W."/>
            <person name="Dante M."/>
            <person name="Du H."/>
            <person name="Edwards J."/>
            <person name="Fryman J."/>
            <person name="Haakensen B."/>
            <person name="Lamar E."/>
            <person name="Latreille P."/>
            <person name="Leonard S."/>
            <person name="Meyer R."/>
            <person name="Mulvaney E."/>
            <person name="Ozersky P."/>
            <person name="Riley A."/>
            <person name="Strowmatt C."/>
            <person name="Wagner-McPherson C."/>
            <person name="Wollam A."/>
            <person name="Yoakum M."/>
            <person name="Bell M."/>
            <person name="Dedhia N."/>
            <person name="Parnell L."/>
            <person name="Shah R."/>
            <person name="Rodriguez M."/>
            <person name="Hoon See L."/>
            <person name="Vil D."/>
            <person name="Baker J."/>
            <person name="Kirchoff K."/>
            <person name="Toth K."/>
            <person name="King L."/>
            <person name="Bahret A."/>
            <person name="Miller B."/>
            <person name="Marra M.A."/>
            <person name="Martienssen R."/>
            <person name="McCombie W.R."/>
            <person name="Wilson R.K."/>
            <person name="Murphy G."/>
            <person name="Bancroft I."/>
            <person name="Volckaert G."/>
            <person name="Wambutt R."/>
            <person name="Duesterhoeft A."/>
            <person name="Stiekema W."/>
            <person name="Pohl T."/>
            <person name="Entian K.-D."/>
            <person name="Terryn N."/>
            <person name="Hartley N."/>
            <person name="Bent E."/>
            <person name="Johnson S."/>
            <person name="Langham S.-A."/>
            <person name="McCullagh B."/>
            <person name="Robben J."/>
            <person name="Grymonprez B."/>
            <person name="Zimmermann W."/>
            <person name="Ramsperger U."/>
            <person name="Wedler H."/>
            <person name="Balke K."/>
            <person name="Wedler E."/>
            <person name="Peters S."/>
            <person name="van Staveren M."/>
            <person name="Dirkse W."/>
            <person name="Mooijman P."/>
            <person name="Klein Lankhorst R."/>
            <person name="Weitzenegger T."/>
            <person name="Bothe G."/>
            <person name="Rose M."/>
            <person name="Hauf J."/>
            <person name="Berneiser S."/>
            <person name="Hempel S."/>
            <person name="Feldpausch M."/>
            <person name="Lamberth S."/>
            <person name="Villarroel R."/>
            <person name="Gielen J."/>
            <person name="Ardiles W."/>
            <person name="Bents O."/>
            <person name="Lemcke K."/>
            <person name="Kolesov G."/>
            <person name="Mayer K.F.X."/>
            <person name="Rudd S."/>
            <person name="Schoof H."/>
            <person name="Schueller C."/>
            <person name="Zaccaria P."/>
            <person name="Mewes H.-W."/>
            <person name="Bevan M."/>
            <person name="Fransz P.F."/>
        </authorList>
    </citation>
    <scope>NUCLEOTIDE SEQUENCE [LARGE SCALE GENOMIC DNA]</scope>
    <source>
        <strain>cv. Columbia</strain>
    </source>
</reference>
<reference key="3">
    <citation type="journal article" date="2017" name="Plant J.">
        <title>Araport11: a complete reannotation of the Arabidopsis thaliana reference genome.</title>
        <authorList>
            <person name="Cheng C.Y."/>
            <person name="Krishnakumar V."/>
            <person name="Chan A.P."/>
            <person name="Thibaud-Nissen F."/>
            <person name="Schobel S."/>
            <person name="Town C.D."/>
        </authorList>
    </citation>
    <scope>GENOME REANNOTATION</scope>
    <source>
        <strain>cv. Columbia</strain>
    </source>
</reference>
<reference key="4">
    <citation type="submission" date="2006-07" db="EMBL/GenBank/DDBJ databases">
        <title>Large-scale analysis of RIKEN Arabidopsis full-length (RAFL) cDNAs.</title>
        <authorList>
            <person name="Totoki Y."/>
            <person name="Seki M."/>
            <person name="Ishida J."/>
            <person name="Nakajima M."/>
            <person name="Enju A."/>
            <person name="Kamiya A."/>
            <person name="Narusaka M."/>
            <person name="Shin-i T."/>
            <person name="Nakagawa M."/>
            <person name="Sakamoto N."/>
            <person name="Oishi K."/>
            <person name="Kohara Y."/>
            <person name="Kobayashi M."/>
            <person name="Toyoda A."/>
            <person name="Sakaki Y."/>
            <person name="Sakurai T."/>
            <person name="Iida K."/>
            <person name="Akiyama K."/>
            <person name="Satou M."/>
            <person name="Toyoda T."/>
            <person name="Konagaya A."/>
            <person name="Carninci P."/>
            <person name="Kawai J."/>
            <person name="Hayashizaki Y."/>
            <person name="Shinozaki K."/>
        </authorList>
    </citation>
    <scope>NUCLEOTIDE SEQUENCE [LARGE SCALE MRNA] (ISOFORM 2)</scope>
    <source>
        <strain>cv. Columbia</strain>
    </source>
</reference>
<reference key="5">
    <citation type="journal article" date="2001" name="New Phytol.">
        <title>The CDPK superfamily of protein kinases.</title>
        <authorList>
            <person name="Harmon A.C."/>
            <person name="Gribskov M."/>
            <person name="Gubrium E."/>
            <person name="Harper J.F."/>
        </authorList>
    </citation>
    <scope>GENE FAMILY</scope>
    <scope>NOMENCLATURE</scope>
</reference>
<reference key="6">
    <citation type="journal article" date="2002" name="Plant Physiol.">
        <title>Calcium signaling through protein kinases. The Arabidopsis calcium-dependent protein kinase gene family.</title>
        <authorList>
            <person name="Cheng S.-H."/>
            <person name="Willmann M.R."/>
            <person name="Chen H.-C."/>
            <person name="Sheen J."/>
        </authorList>
    </citation>
    <scope>GENE FAMILY</scope>
    <scope>NOMENCLATURE</scope>
</reference>
<reference key="7">
    <citation type="journal article" date="2003" name="Mol. Cell. Proteomics">
        <title>Large-scale analysis of in vivo phosphorylated membrane proteins by immobilized metal ion affinity chromatography and mass spectrometry.</title>
        <authorList>
            <person name="Nuehse T.S."/>
            <person name="Stensballe A."/>
            <person name="Jensen O.N."/>
            <person name="Peck S.C."/>
        </authorList>
    </citation>
    <scope>IDENTIFICATION BY MASS SPECTROMETRY [LARGE SCALE ANALYSIS]</scope>
    <source>
        <strain>cv. La-0</strain>
    </source>
</reference>
<reference key="8">
    <citation type="journal article" date="2003" name="Plant Physiol.">
        <title>The Arabidopsis CDPK-SnRK superfamily of protein kinases.</title>
        <authorList>
            <person name="Hrabak E.M."/>
            <person name="Chan C.W.M."/>
            <person name="Gribskov M."/>
            <person name="Harper J.F."/>
            <person name="Choi J.H."/>
            <person name="Halford N."/>
            <person name="Kudla J."/>
            <person name="Luan S."/>
            <person name="Nimmo H.G."/>
            <person name="Sussman M.R."/>
            <person name="Thomas M."/>
            <person name="Walker-Simmons K."/>
            <person name="Zhu J.-K."/>
            <person name="Harmon A.C."/>
        </authorList>
    </citation>
    <scope>GENE FAMILY</scope>
    <scope>NOMENCLATURE</scope>
</reference>
<reference key="9">
    <citation type="journal article" date="2003" name="Plant Physiol.">
        <title>Subcellular targeting of nine calcium-dependent protein kinase isoforms from Arabidopsis.</title>
        <authorList>
            <person name="Dammann C."/>
            <person name="Ichida A."/>
            <person name="Hong B."/>
            <person name="Romanowsky S.M."/>
            <person name="Hrabak E.M."/>
            <person name="Harmon A.C."/>
            <person name="Pickard B.G."/>
            <person name="Harper J.F."/>
        </authorList>
    </citation>
    <scope>SUBCELLULAR LOCATION</scope>
</reference>
<reference key="10">
    <citation type="journal article" date="2004" name="Plant Cell">
        <title>Phosphoproteomics of the Arabidopsis plasma membrane and a new phosphorylation site database.</title>
        <authorList>
            <person name="Nuehse T.S."/>
            <person name="Stensballe A."/>
            <person name="Jensen O.N."/>
            <person name="Peck S.C."/>
        </authorList>
    </citation>
    <scope>IDENTIFICATION BY MASS SPECTROMETRY [LARGE SCALE ANALYSIS]</scope>
</reference>
<reference key="11">
    <citation type="journal article" date="2009" name="J. Proteomics">
        <title>Phosphoproteomic analysis of nuclei-enriched fractions from Arabidopsis thaliana.</title>
        <authorList>
            <person name="Jones A.M.E."/>
            <person name="MacLean D."/>
            <person name="Studholme D.J."/>
            <person name="Serna-Sanz A."/>
            <person name="Andreasson E."/>
            <person name="Rathjen J.P."/>
            <person name="Peck S.C."/>
        </authorList>
    </citation>
    <scope>IDENTIFICATION BY MASS SPECTROMETRY [LARGE SCALE ANALYSIS]</scope>
    <source>
        <strain>cv. Columbia</strain>
    </source>
</reference>
<reference key="12">
    <citation type="journal article" date="2009" name="Plant Physiol.">
        <title>Large-scale Arabidopsis phosphoproteome profiling reveals novel chloroplast kinase substrates and phosphorylation networks.</title>
        <authorList>
            <person name="Reiland S."/>
            <person name="Messerli G."/>
            <person name="Baerenfaller K."/>
            <person name="Gerrits B."/>
            <person name="Endler A."/>
            <person name="Grossmann J."/>
            <person name="Gruissem W."/>
            <person name="Baginsky S."/>
        </authorList>
    </citation>
    <scope>PHOSPHORYLATION [LARGE SCALE ANALYSIS] AT SER-526</scope>
    <scope>IDENTIFICATION BY MASS SPECTROMETRY [LARGE SCALE ANALYSIS]</scope>
</reference>
<dbReference type="EC" id="2.7.11.1"/>
<dbReference type="EMBL" id="U20624">
    <property type="protein sequence ID" value="AAA67655.1"/>
    <property type="molecule type" value="mRNA"/>
</dbReference>
<dbReference type="EMBL" id="U20627">
    <property type="protein sequence ID" value="AAA67658.1"/>
    <property type="molecule type" value="Genomic_DNA"/>
</dbReference>
<dbReference type="EMBL" id="AF296837">
    <property type="status" value="NOT_ANNOTATED_CDS"/>
    <property type="molecule type" value="Genomic_DNA"/>
</dbReference>
<dbReference type="EMBL" id="CP002688">
    <property type="protein sequence ID" value="AED92708.1"/>
    <property type="molecule type" value="Genomic_DNA"/>
</dbReference>
<dbReference type="EMBL" id="CP002688">
    <property type="protein sequence ID" value="AED92709.1"/>
    <property type="molecule type" value="Genomic_DNA"/>
</dbReference>
<dbReference type="EMBL" id="AK227066">
    <property type="protein sequence ID" value="BAE99123.1"/>
    <property type="molecule type" value="mRNA"/>
</dbReference>
<dbReference type="PIR" id="S71778">
    <property type="entry name" value="S71778"/>
</dbReference>
<dbReference type="RefSeq" id="NP_197446.1">
    <molecule id="Q42438-1"/>
    <property type="nucleotide sequence ID" value="NM_121950.3"/>
</dbReference>
<dbReference type="RefSeq" id="NP_850853.1">
    <molecule id="Q42438-1"/>
    <property type="nucleotide sequence ID" value="NM_180522.3"/>
</dbReference>
<dbReference type="SMR" id="Q42438"/>
<dbReference type="BioGRID" id="17341">
    <property type="interactions" value="5"/>
</dbReference>
<dbReference type="FunCoup" id="Q42438">
    <property type="interactions" value="2407"/>
</dbReference>
<dbReference type="STRING" id="3702.Q42438"/>
<dbReference type="iPTMnet" id="Q42438"/>
<dbReference type="SwissPalm" id="Q42438"/>
<dbReference type="PaxDb" id="3702-AT5G19450.2"/>
<dbReference type="ProteomicsDB" id="220468">
    <molecule id="Q42438-1"/>
</dbReference>
<dbReference type="EnsemblPlants" id="AT5G19450.1">
    <molecule id="Q42438-1"/>
    <property type="protein sequence ID" value="AT5G19450.1"/>
    <property type="gene ID" value="AT5G19450"/>
</dbReference>
<dbReference type="EnsemblPlants" id="AT5G19450.2">
    <molecule id="Q42438-1"/>
    <property type="protein sequence ID" value="AT5G19450.2"/>
    <property type="gene ID" value="AT5G19450"/>
</dbReference>
<dbReference type="GeneID" id="832065"/>
<dbReference type="Gramene" id="AT5G19450.1">
    <molecule id="Q42438-1"/>
    <property type="protein sequence ID" value="AT5G19450.1"/>
    <property type="gene ID" value="AT5G19450"/>
</dbReference>
<dbReference type="Gramene" id="AT5G19450.2">
    <molecule id="Q42438-1"/>
    <property type="protein sequence ID" value="AT5G19450.2"/>
    <property type="gene ID" value="AT5G19450"/>
</dbReference>
<dbReference type="KEGG" id="ath:AT5G19450"/>
<dbReference type="Araport" id="AT5G19450"/>
<dbReference type="TAIR" id="AT5G19450">
    <property type="gene designation" value="CDPK19"/>
</dbReference>
<dbReference type="eggNOG" id="KOG0032">
    <property type="taxonomic scope" value="Eukaryota"/>
</dbReference>
<dbReference type="HOGENOM" id="CLU_000288_37_4_1"/>
<dbReference type="InParanoid" id="Q42438"/>
<dbReference type="OMA" id="WIQKHAP"/>
<dbReference type="PhylomeDB" id="Q42438"/>
<dbReference type="PRO" id="PR:Q42438"/>
<dbReference type="Proteomes" id="UP000006548">
    <property type="component" value="Chromosome 5"/>
</dbReference>
<dbReference type="ExpressionAtlas" id="Q42438">
    <property type="expression patterns" value="baseline and differential"/>
</dbReference>
<dbReference type="GO" id="GO:0005886">
    <property type="term" value="C:plasma membrane"/>
    <property type="evidence" value="ECO:0007005"/>
    <property type="project" value="TAIR"/>
</dbReference>
<dbReference type="GO" id="GO:0005524">
    <property type="term" value="F:ATP binding"/>
    <property type="evidence" value="ECO:0007669"/>
    <property type="project" value="UniProtKB-KW"/>
</dbReference>
<dbReference type="GO" id="GO:0005509">
    <property type="term" value="F:calcium ion binding"/>
    <property type="evidence" value="ECO:0007669"/>
    <property type="project" value="InterPro"/>
</dbReference>
<dbReference type="GO" id="GO:0106310">
    <property type="term" value="F:protein serine kinase activity"/>
    <property type="evidence" value="ECO:0007669"/>
    <property type="project" value="RHEA"/>
</dbReference>
<dbReference type="GO" id="GO:0004674">
    <property type="term" value="F:protein serine/threonine kinase activity"/>
    <property type="evidence" value="ECO:0007669"/>
    <property type="project" value="UniProtKB-KW"/>
</dbReference>
<dbReference type="CDD" id="cd00051">
    <property type="entry name" value="EFh"/>
    <property type="match status" value="1"/>
</dbReference>
<dbReference type="CDD" id="cd05117">
    <property type="entry name" value="STKc_CAMK"/>
    <property type="match status" value="1"/>
</dbReference>
<dbReference type="FunFam" id="3.30.200.20:FF:000004">
    <property type="entry name" value="Calcium-dependent protein kinase 1"/>
    <property type="match status" value="1"/>
</dbReference>
<dbReference type="FunFam" id="1.10.510.10:FF:000067">
    <property type="entry name" value="calcium-dependent protein kinase 13"/>
    <property type="match status" value="1"/>
</dbReference>
<dbReference type="FunFam" id="1.10.238.10:FF:000050">
    <property type="entry name" value="Calcium-dependent protein kinase 7"/>
    <property type="match status" value="1"/>
</dbReference>
<dbReference type="Gene3D" id="1.10.238.10">
    <property type="entry name" value="EF-hand"/>
    <property type="match status" value="1"/>
</dbReference>
<dbReference type="Gene3D" id="3.30.200.20">
    <property type="entry name" value="Phosphorylase Kinase, domain 1"/>
    <property type="match status" value="1"/>
</dbReference>
<dbReference type="Gene3D" id="1.10.510.10">
    <property type="entry name" value="Transferase(Phosphotransferase) domain 1"/>
    <property type="match status" value="1"/>
</dbReference>
<dbReference type="InterPro" id="IPR050205">
    <property type="entry name" value="CDPK_Ser/Thr_kinases"/>
</dbReference>
<dbReference type="InterPro" id="IPR011992">
    <property type="entry name" value="EF-hand-dom_pair"/>
</dbReference>
<dbReference type="InterPro" id="IPR018247">
    <property type="entry name" value="EF_Hand_1_Ca_BS"/>
</dbReference>
<dbReference type="InterPro" id="IPR002048">
    <property type="entry name" value="EF_hand_dom"/>
</dbReference>
<dbReference type="InterPro" id="IPR011009">
    <property type="entry name" value="Kinase-like_dom_sf"/>
</dbReference>
<dbReference type="InterPro" id="IPR000719">
    <property type="entry name" value="Prot_kinase_dom"/>
</dbReference>
<dbReference type="InterPro" id="IPR017441">
    <property type="entry name" value="Protein_kinase_ATP_BS"/>
</dbReference>
<dbReference type="InterPro" id="IPR008271">
    <property type="entry name" value="Ser/Thr_kinase_AS"/>
</dbReference>
<dbReference type="PANTHER" id="PTHR24349">
    <property type="entry name" value="SERINE/THREONINE-PROTEIN KINASE"/>
    <property type="match status" value="1"/>
</dbReference>
<dbReference type="Pfam" id="PF13499">
    <property type="entry name" value="EF-hand_7"/>
    <property type="match status" value="2"/>
</dbReference>
<dbReference type="Pfam" id="PF00069">
    <property type="entry name" value="Pkinase"/>
    <property type="match status" value="1"/>
</dbReference>
<dbReference type="SMART" id="SM00054">
    <property type="entry name" value="EFh"/>
    <property type="match status" value="4"/>
</dbReference>
<dbReference type="SMART" id="SM00220">
    <property type="entry name" value="S_TKc"/>
    <property type="match status" value="1"/>
</dbReference>
<dbReference type="SUPFAM" id="SSF47473">
    <property type="entry name" value="EF-hand"/>
    <property type="match status" value="1"/>
</dbReference>
<dbReference type="SUPFAM" id="SSF56112">
    <property type="entry name" value="Protein kinase-like (PK-like)"/>
    <property type="match status" value="1"/>
</dbReference>
<dbReference type="PROSITE" id="PS00018">
    <property type="entry name" value="EF_HAND_1"/>
    <property type="match status" value="3"/>
</dbReference>
<dbReference type="PROSITE" id="PS50222">
    <property type="entry name" value="EF_HAND_2"/>
    <property type="match status" value="4"/>
</dbReference>
<dbReference type="PROSITE" id="PS00107">
    <property type="entry name" value="PROTEIN_KINASE_ATP"/>
    <property type="match status" value="1"/>
</dbReference>
<dbReference type="PROSITE" id="PS50011">
    <property type="entry name" value="PROTEIN_KINASE_DOM"/>
    <property type="match status" value="1"/>
</dbReference>
<dbReference type="PROSITE" id="PS00108">
    <property type="entry name" value="PROTEIN_KINASE_ST"/>
    <property type="match status" value="1"/>
</dbReference>